<sequence>MKMLTEHFDFPKLNFATIVISGATIIGIIFLRYLNYPTKVNVPVVGIGVRYTKWLAAIINVRHARQSIREGYAKYGDFAFQIPTMTRMEVFICDRQMTREYQNVDDYHLSFRAVMTEEFQFKWLLPGQAHEARIIPNSVIAKALSWQRTRANKPSDPFFESFSAEFMQGFQEEMRRLIQYQNSSVMSNRSGAVLDPAHGWHAVPCFPLALKVIGRLTTYVLFGKPLCQDATFLNMCCQFGDVIPRDAIILRSWPALARPLIVKILSAPRVMGKLRNILIVEIKSRRESHETNPMSDILDFTMAWVDRHPNASFDDQHIAEMMINTIFAALHTSSQLVVHTIFELASRPEYSDALLEEIDACFEKHGKGTKAALDSMFKVDSFIKETQRFNPLDASALARLALKDFTFSNGLNIPKGSVIFTPNSPIFEDERYYKDPKVFDGFRFARMRNDPKLGLFCDLTATNEQSMHFGTGRHACPGRFMVSDEVKLAVIHILSNFDFCIENFGPRPANQPFGKFLLPDMSAKIWLREKRAREKNL</sequence>
<evidence type="ECO:0000250" key="1">
    <source>
        <dbReference type="UniProtKB" id="P04798"/>
    </source>
</evidence>
<evidence type="ECO:0000255" key="2"/>
<evidence type="ECO:0000255" key="3">
    <source>
        <dbReference type="PROSITE-ProRule" id="PRU00498"/>
    </source>
</evidence>
<evidence type="ECO:0000269" key="4">
    <source>
    </source>
</evidence>
<evidence type="ECO:0000269" key="5">
    <source>
    </source>
</evidence>
<evidence type="ECO:0000269" key="6">
    <source>
    </source>
</evidence>
<evidence type="ECO:0000269" key="7">
    <source>
    </source>
</evidence>
<evidence type="ECO:0000303" key="8">
    <source>
    </source>
</evidence>
<evidence type="ECO:0000305" key="9"/>
<evidence type="ECO:0000305" key="10">
    <source>
    </source>
</evidence>
<name>LTMQ_EPIFI</name>
<gene>
    <name evidence="8" type="primary">ltmQ</name>
</gene>
<organism>
    <name type="scientific">Epichloe festucae var. lolii</name>
    <name type="common">Neotyphodium lolii</name>
    <name type="synonym">Acremonium lolii</name>
    <dbReference type="NCBI Taxonomy" id="73839"/>
    <lineage>
        <taxon>Eukaryota</taxon>
        <taxon>Fungi</taxon>
        <taxon>Dikarya</taxon>
        <taxon>Ascomycota</taxon>
        <taxon>Pezizomycotina</taxon>
        <taxon>Sordariomycetes</taxon>
        <taxon>Hypocreomycetidae</taxon>
        <taxon>Hypocreales</taxon>
        <taxon>Clavicipitaceae</taxon>
        <taxon>Epichloe</taxon>
    </lineage>
</organism>
<reference key="1">
    <citation type="journal article" date="2006" name="Fungal Genet. Biol.">
        <title>A complex gene cluster for indole-diterpene biosynthesis in the grass endophyte Neotyphodium lolii.</title>
        <authorList>
            <person name="Young C.A."/>
            <person name="Felitti S."/>
            <person name="Shields K."/>
            <person name="Spangenberg G."/>
            <person name="Johnson R.D."/>
            <person name="Bryan G.T."/>
            <person name="Saikia S."/>
            <person name="Scott B."/>
        </authorList>
    </citation>
    <scope>NUCLEOTIDE SEQUENCE [GENOMIC DNA]</scope>
    <source>
        <strain>Lp19</strain>
    </source>
</reference>
<reference key="2">
    <citation type="journal article" date="2005" name="Mol. Genet. Genomics">
        <title>Molecular cloning and genetic analysis of a symbiosis-expressed gene cluster for lolitrem biosynthesis from a mutualistic endophyte of perennial ryegrass.</title>
        <authorList>
            <person name="Young C.A."/>
            <person name="Bryant M.K."/>
            <person name="Christensen M.J."/>
            <person name="Tapper B.A."/>
            <person name="Bryan G.T."/>
            <person name="Scott B."/>
        </authorList>
    </citation>
    <scope>FUNCTION</scope>
    <source>
        <strain>Lp19</strain>
    </source>
</reference>
<reference key="3">
    <citation type="journal article" date="2010" name="Plant Physiol.">
        <title>Disruption of signaling in a fungal-grass symbiosis leads to pathogenesis.</title>
        <authorList>
            <person name="Eaton C.J."/>
            <person name="Cox M.P."/>
            <person name="Ambrose B."/>
            <person name="Becker M."/>
            <person name="Hesse U."/>
            <person name="Schardl C.L."/>
            <person name="Scott B."/>
        </authorList>
    </citation>
    <scope>INDUCTION</scope>
</reference>
<reference key="4">
    <citation type="journal article" date="2012" name="FEBS Lett.">
        <title>Functional analysis of an indole-diterpene gene cluster for lolitrem B biosynthesis in the grass endosymbiont Epichloe festucae.</title>
        <authorList>
            <person name="Saikia S."/>
            <person name="Takemoto D."/>
            <person name="Tapper B.A."/>
            <person name="Lane G.A."/>
            <person name="Fraser K."/>
            <person name="Scott B."/>
        </authorList>
    </citation>
    <scope>FUNCTION</scope>
    <scope>DISRUPTION PHENOTYPE</scope>
    <scope>PATHWAY</scope>
</reference>
<keyword id="KW-0325">Glycoprotein</keyword>
<keyword id="KW-0349">Heme</keyword>
<keyword id="KW-0408">Iron</keyword>
<keyword id="KW-0472">Membrane</keyword>
<keyword id="KW-0479">Metal-binding</keyword>
<keyword id="KW-0503">Monooxygenase</keyword>
<keyword id="KW-0560">Oxidoreductase</keyword>
<keyword id="KW-0812">Transmembrane</keyword>
<keyword id="KW-1133">Transmembrane helix</keyword>
<feature type="chain" id="PRO_0000444334" description="Cytochrome P450 monooxygenase ltmQ">
    <location>
        <begin position="1"/>
        <end position="537"/>
    </location>
</feature>
<feature type="transmembrane region" description="Helical" evidence="2">
    <location>
        <begin position="10"/>
        <end position="30"/>
    </location>
</feature>
<feature type="binding site" description="axial binding residue" evidence="1">
    <location>
        <position position="476"/>
    </location>
    <ligand>
        <name>heme</name>
        <dbReference type="ChEBI" id="CHEBI:30413"/>
    </ligand>
    <ligandPart>
        <name>Fe</name>
        <dbReference type="ChEBI" id="CHEBI:18248"/>
    </ligandPart>
</feature>
<feature type="glycosylation site" description="N-linked (GlcNAc...) asparagine" evidence="3">
    <location>
        <position position="182"/>
    </location>
</feature>
<feature type="glycosylation site" description="N-linked (GlcNAc...) asparagine" evidence="3">
    <location>
        <position position="188"/>
    </location>
</feature>
<feature type="glycosylation site" description="N-linked (GlcNAc...) asparagine" evidence="3">
    <location>
        <position position="310"/>
    </location>
</feature>
<dbReference type="EC" id="1.-.-.-" evidence="10"/>
<dbReference type="EMBL" id="DQ443465">
    <property type="protein sequence ID" value="ABF20223.1"/>
    <property type="molecule type" value="Genomic_DNA"/>
</dbReference>
<dbReference type="SMR" id="Q15FB4"/>
<dbReference type="GlyCosmos" id="Q15FB4">
    <property type="glycosylation" value="3 sites, No reported glycans"/>
</dbReference>
<dbReference type="GO" id="GO:0016020">
    <property type="term" value="C:membrane"/>
    <property type="evidence" value="ECO:0007669"/>
    <property type="project" value="UniProtKB-SubCell"/>
</dbReference>
<dbReference type="GO" id="GO:0020037">
    <property type="term" value="F:heme binding"/>
    <property type="evidence" value="ECO:0007669"/>
    <property type="project" value="InterPro"/>
</dbReference>
<dbReference type="GO" id="GO:0005506">
    <property type="term" value="F:iron ion binding"/>
    <property type="evidence" value="ECO:0007669"/>
    <property type="project" value="InterPro"/>
</dbReference>
<dbReference type="GO" id="GO:0004497">
    <property type="term" value="F:monooxygenase activity"/>
    <property type="evidence" value="ECO:0007669"/>
    <property type="project" value="UniProtKB-KW"/>
</dbReference>
<dbReference type="GO" id="GO:0016705">
    <property type="term" value="F:oxidoreductase activity, acting on paired donors, with incorporation or reduction of molecular oxygen"/>
    <property type="evidence" value="ECO:0007669"/>
    <property type="project" value="InterPro"/>
</dbReference>
<dbReference type="GO" id="GO:0019748">
    <property type="term" value="P:secondary metabolic process"/>
    <property type="evidence" value="ECO:0007669"/>
    <property type="project" value="UniProtKB-ARBA"/>
</dbReference>
<dbReference type="CDD" id="cd11041">
    <property type="entry name" value="CYP503A1-like"/>
    <property type="match status" value="1"/>
</dbReference>
<dbReference type="Gene3D" id="1.10.630.10">
    <property type="entry name" value="Cytochrome P450"/>
    <property type="match status" value="1"/>
</dbReference>
<dbReference type="InterPro" id="IPR001128">
    <property type="entry name" value="Cyt_P450"/>
</dbReference>
<dbReference type="InterPro" id="IPR017972">
    <property type="entry name" value="Cyt_P450_CS"/>
</dbReference>
<dbReference type="InterPro" id="IPR002401">
    <property type="entry name" value="Cyt_P450_E_grp-I"/>
</dbReference>
<dbReference type="InterPro" id="IPR036396">
    <property type="entry name" value="Cyt_P450_sf"/>
</dbReference>
<dbReference type="PANTHER" id="PTHR46206">
    <property type="entry name" value="CYTOCHROME P450"/>
    <property type="match status" value="1"/>
</dbReference>
<dbReference type="PANTHER" id="PTHR46206:SF4">
    <property type="entry name" value="P450, PUTATIVE (EUROFUNG)-RELATED"/>
    <property type="match status" value="1"/>
</dbReference>
<dbReference type="Pfam" id="PF00067">
    <property type="entry name" value="p450"/>
    <property type="match status" value="1"/>
</dbReference>
<dbReference type="PRINTS" id="PR00463">
    <property type="entry name" value="EP450I"/>
</dbReference>
<dbReference type="SUPFAM" id="SSF48264">
    <property type="entry name" value="Cytochrome P450"/>
    <property type="match status" value="1"/>
</dbReference>
<dbReference type="PROSITE" id="PS00086">
    <property type="entry name" value="CYTOCHROME_P450"/>
    <property type="match status" value="1"/>
</dbReference>
<protein>
    <recommendedName>
        <fullName evidence="8">Cytochrome P450 monooxygenase ltmQ</fullName>
        <ecNumber evidence="10">1.-.-.-</ecNumber>
    </recommendedName>
    <alternativeName>
        <fullName evidence="8">Lolitrem B biosynthesis cluster 2 protein Q</fullName>
    </alternativeName>
</protein>
<proteinExistence type="evidence at transcript level"/>
<comment type="function">
    <text evidence="4 5 7">Cytochrome P450 monooxygenase; part of the gene clusters that mediates the biosynthesis of lolitrems, indole-diterpene mycotoxins that are potent tremorgens in mammals, and are synthesized by clavicipitaceous fungal endophytes in association with their grass hosts (PubMed:16765617, PubMed:22750140). The geranylgeranyl diphosphate (GGPP) synthase ltmG is proposed to catalyze the first step in lolitrem biosynthesis (PubMed:15991026, PubMed:16765617). LtmG catalyzes a series of iterative condensations of isopentenyl diphosphate (IPP) with dimethylallyl diphosphate (DMAPP), geranyl diphosphate (GPP), and farnesyl diphosphate (FPP), to form GGPP (PubMed:15991026, PubMed:16765617). GGPP then condenses with indole-3-glycerol phosphate to form 3-geranylgeranylindole, an acyclic intermediate, to be incorporated into paxilline (PubMed:16765617). Either ltmG or ltmC could be responsible for this step, as both are putative prenyl transferases (PubMed:16765617). The FAD-dependent monooxygenase ltmM then catalyzes the epoxidation of the two terminal alkenes of the geranylgeranyl moiety, which is subsequently cyclized by ltmB, to paspaline (PubMed:15991026, PubMed:16765617). The cytochrome P450 monooxygenases ltmQ and ltmP can sequentially oxidize paspaline to terpendole E and terpendole F (PubMed:22750140). Alternatively, ltmP converts paspaline to an intermediate which is oxidized by ltmQ to terpendole F (PubMed:22750140). LtmF, ltmK, ltmE and ltmJ appear to be unique to the epichloe endophytes (PubMed:15991026, PubMed:16765617). The prenyltransferase ltmF is involved in the 27-hydroxyl-O-prenylation (PubMed:22750140). The cytochrome P450 monooxygenase ltmK is required for the oxidative acetal ring formation (PubMed:22750140). The multi-functional prenyltransferase ltmE is required for C20- and C21-prenylations of the indole ring of paspalanes and acts together with the cytochrome P450 monooxygenase ltmJ to yield lolitremanes by multiple oxidations and ring closures (PubMed:22750140). The stereoisomer pairs of lolitriol and lolitrem N or lolitrem B and lolitrem F may be attributed to variations in the way in which ring closure can occur under the action of ltmJ (PubMed:22750140). While the major product of this pathway is lolitrem B, the prenyl transferases and cytochrome P450 monooxygenases identified in this pathway have a remarkable versatility in their regio- and stereo-specificities to generate a diverse range of metabolites that are products of a metabolic grid rather than a linear pathway (PubMed:22750140).</text>
</comment>
<comment type="cofactor">
    <cofactor evidence="1">
        <name>heme</name>
        <dbReference type="ChEBI" id="CHEBI:30413"/>
    </cofactor>
</comment>
<comment type="pathway">
    <text evidence="7">Secondary metabolite biosynthesis.</text>
</comment>
<comment type="subcellular location">
    <subcellularLocation>
        <location evidence="2">Membrane</location>
        <topology evidence="2">Single-pass membrane protein</topology>
    </subcellularLocation>
</comment>
<comment type="induction">
    <text evidence="6">Expression is down-regulated when the stress-activated mitogen-activated protein kinase (sakA) is deleted (PubMed:20519633).</text>
</comment>
<comment type="disruption phenotype">
    <text evidence="7">Accumulates the paspalane 13-desoxypaxilline (PubMed:22750140).</text>
</comment>
<comment type="similarity">
    <text evidence="9">Belongs to the cytochrome P450 family.</text>
</comment>
<accession>Q15FB4</accession>